<gene>
    <name type="ordered locus">Cgl1651</name>
    <name type="ordered locus">cg1859</name>
</gene>
<sequence>MKLFSRTSLVALGTAAAITLSGVTAPAFADEDSNAAVSALKTAEDNTPEAPGASTPLKLEQPGTITGVPGKAITPVTVKVVAGEAESFTSDNLPSGLLIDNTGKITGTPKKEFTGSAKIIAKNEAGVEAEVYVNFDFNEEPSSEEPSSGSSDTDNIENWIKIITAVIGALTTILTFSTKLDSFLK</sequence>
<feature type="signal peptide" evidence="1">
    <location>
        <begin position="1"/>
        <end position="29"/>
    </location>
</feature>
<feature type="chain" id="PRO_0000421158" description="Uncharacterized protein Cgl1651/cg1859">
    <location>
        <begin position="30"/>
        <end position="185"/>
    </location>
</feature>
<feature type="region of interest" description="Disordered" evidence="2">
    <location>
        <begin position="41"/>
        <end position="66"/>
    </location>
</feature>
<feature type="sequence conflict" description="In Ref. 2; CAF20034." evidence="4" ref="2">
    <original>V</original>
    <variation>I</variation>
    <location>
        <position position="81"/>
    </location>
</feature>
<feature type="sequence conflict" description="In Ref. 2; CAF20034." evidence="4" ref="2">
    <original>E</original>
    <variation>D</variation>
    <location>
        <position position="140"/>
    </location>
</feature>
<dbReference type="EMBL" id="BA000036">
    <property type="protein sequence ID" value="BAB99044.1"/>
    <property type="molecule type" value="Genomic_DNA"/>
</dbReference>
<dbReference type="EMBL" id="BX927153">
    <property type="protein sequence ID" value="CAF20034.1"/>
    <property type="molecule type" value="Genomic_DNA"/>
</dbReference>
<dbReference type="RefSeq" id="NP_600864.1">
    <property type="nucleotide sequence ID" value="NC_003450.3"/>
</dbReference>
<dbReference type="RefSeq" id="WP_011014512.1">
    <property type="nucleotide sequence ID" value="NC_003450.3"/>
</dbReference>
<dbReference type="RefSeq" id="WP_011265775.1">
    <property type="nucleotide sequence ID" value="NC_006958.1"/>
</dbReference>
<dbReference type="SMR" id="Q8NQ03"/>
<dbReference type="GeneID" id="1019619"/>
<dbReference type="KEGG" id="cgb:cg1859"/>
<dbReference type="KEGG" id="cgl:Cgl1651"/>
<dbReference type="PATRIC" id="fig|196627.13.peg.1612"/>
<dbReference type="HOGENOM" id="CLU_1493486_0_0_11"/>
<dbReference type="OrthoDB" id="4411178at2"/>
<dbReference type="BioCyc" id="CORYNE:G18NG-11236-MONOMER"/>
<dbReference type="Proteomes" id="UP000000582">
    <property type="component" value="Chromosome"/>
</dbReference>
<dbReference type="Proteomes" id="UP000001009">
    <property type="component" value="Chromosome"/>
</dbReference>
<dbReference type="GO" id="GO:0005576">
    <property type="term" value="C:extracellular region"/>
    <property type="evidence" value="ECO:0007669"/>
    <property type="project" value="UniProtKB-SubCell"/>
</dbReference>
<dbReference type="GO" id="GO:0005975">
    <property type="term" value="P:carbohydrate metabolic process"/>
    <property type="evidence" value="ECO:0007669"/>
    <property type="project" value="UniProtKB-ARBA"/>
</dbReference>
<dbReference type="Gene3D" id="2.60.40.10">
    <property type="entry name" value="Immunoglobulins"/>
    <property type="match status" value="1"/>
</dbReference>
<dbReference type="InterPro" id="IPR013783">
    <property type="entry name" value="Ig-like_fold"/>
</dbReference>
<proteinExistence type="evidence at protein level"/>
<protein>
    <recommendedName>
        <fullName>Uncharacterized protein Cgl1651/cg1859</fullName>
    </recommendedName>
</protein>
<comment type="subcellular location">
    <subcellularLocation>
        <location evidence="3">Secreted</location>
    </subcellularLocation>
</comment>
<comment type="PTM">
    <text evidence="3">Glycosylated; by Pmt.</text>
</comment>
<reference key="1">
    <citation type="journal article" date="2003" name="Appl. Microbiol. Biotechnol.">
        <title>The Corynebacterium glutamicum genome: features and impacts on biotechnological processes.</title>
        <authorList>
            <person name="Ikeda M."/>
            <person name="Nakagawa S."/>
        </authorList>
    </citation>
    <scope>NUCLEOTIDE SEQUENCE [LARGE SCALE GENOMIC DNA]</scope>
    <source>
        <strain>ATCC 13032 / DSM 20300 / JCM 1318 / BCRC 11384 / CCUG 27702 / LMG 3730 / NBRC 12168 / NCIMB 10025 / NRRL B-2784 / 534</strain>
    </source>
</reference>
<reference key="2">
    <citation type="journal article" date="2003" name="J. Biotechnol.">
        <title>The complete Corynebacterium glutamicum ATCC 13032 genome sequence and its impact on the production of L-aspartate-derived amino acids and vitamins.</title>
        <authorList>
            <person name="Kalinowski J."/>
            <person name="Bathe B."/>
            <person name="Bartels D."/>
            <person name="Bischoff N."/>
            <person name="Bott M."/>
            <person name="Burkovski A."/>
            <person name="Dusch N."/>
            <person name="Eggeling L."/>
            <person name="Eikmanns B.J."/>
            <person name="Gaigalat L."/>
            <person name="Goesmann A."/>
            <person name="Hartmann M."/>
            <person name="Huthmacher K."/>
            <person name="Kraemer R."/>
            <person name="Linke B."/>
            <person name="McHardy A.C."/>
            <person name="Meyer F."/>
            <person name="Moeckel B."/>
            <person name="Pfefferle W."/>
            <person name="Puehler A."/>
            <person name="Rey D.A."/>
            <person name="Rueckert C."/>
            <person name="Rupp O."/>
            <person name="Sahm H."/>
            <person name="Wendisch V.F."/>
            <person name="Wiegraebe I."/>
            <person name="Tauch A."/>
        </authorList>
    </citation>
    <scope>NUCLEOTIDE SEQUENCE [LARGE SCALE GENOMIC DNA]</scope>
    <source>
        <strain>ATCC 13032 / DSM 20300 / JCM 1318 / BCRC 11384 / CCUG 27702 / LMG 3730 / NBRC 12168 / NCIMB 10025 / NRRL B-2784 / 534</strain>
    </source>
</reference>
<reference key="3">
    <citation type="journal article" date="2006" name="FEMS Microbiol. Lett.">
        <title>The Corynebacterium glutamicum gene pmt encoding a glycosyltransferase related to eukaryotic protein-O-mannosyltransferases is essential for glycosylation of the resuscitation promoting factor (Rpf2) and other secreted proteins.</title>
        <authorList>
            <person name="Mahne M."/>
            <person name="Tauch A."/>
            <person name="Puhler A."/>
            <person name="Kalinowski J."/>
        </authorList>
    </citation>
    <scope>IDENTIFICATION BY MASS SPECTROMETRY</scope>
    <scope>SUBCELLULAR LOCATION</scope>
    <scope>GLYCOSYLATION</scope>
    <source>
        <strain>ATCC 13032 / DSM 20300 / JCM 1318 / BCRC 11384 / CCUG 27702 / LMG 3730 / NBRC 12168 / NCIMB 10025 / NRRL B-2784 / 534</strain>
    </source>
</reference>
<organism>
    <name type="scientific">Corynebacterium glutamicum (strain ATCC 13032 / DSM 20300 / JCM 1318 / BCRC 11384 / CCUG 27702 / LMG 3730 / NBRC 12168 / NCIMB 10025 / NRRL B-2784 / 534)</name>
    <dbReference type="NCBI Taxonomy" id="196627"/>
    <lineage>
        <taxon>Bacteria</taxon>
        <taxon>Bacillati</taxon>
        <taxon>Actinomycetota</taxon>
        <taxon>Actinomycetes</taxon>
        <taxon>Mycobacteriales</taxon>
        <taxon>Corynebacteriaceae</taxon>
        <taxon>Corynebacterium</taxon>
    </lineage>
</organism>
<evidence type="ECO:0000255" key="1"/>
<evidence type="ECO:0000256" key="2">
    <source>
        <dbReference type="SAM" id="MobiDB-lite"/>
    </source>
</evidence>
<evidence type="ECO:0000269" key="3">
    <source>
    </source>
</evidence>
<evidence type="ECO:0000305" key="4"/>
<accession>Q8NQ03</accession>
<accession>Q6M4W9</accession>
<name>Y1651_CORGL</name>
<keyword id="KW-0325">Glycoprotein</keyword>
<keyword id="KW-1185">Reference proteome</keyword>
<keyword id="KW-0964">Secreted</keyword>
<keyword id="KW-0732">Signal</keyword>